<gene>
    <name type="primary">OR10J1</name>
</gene>
<keyword id="KW-1003">Cell membrane</keyword>
<keyword id="KW-1015">Disulfide bond</keyword>
<keyword id="KW-0297">G-protein coupled receptor</keyword>
<keyword id="KW-0325">Glycoprotein</keyword>
<keyword id="KW-0472">Membrane</keyword>
<keyword id="KW-0552">Olfaction</keyword>
<keyword id="KW-0675">Receptor</keyword>
<keyword id="KW-1185">Reference proteome</keyword>
<keyword id="KW-0716">Sensory transduction</keyword>
<keyword id="KW-0807">Transducer</keyword>
<keyword id="KW-0812">Transmembrane</keyword>
<keyword id="KW-1133">Transmembrane helix</keyword>
<dbReference type="EMBL" id="X64995">
    <property type="protein sequence ID" value="CAA46128.1"/>
    <property type="molecule type" value="Genomic_DNA"/>
</dbReference>
<dbReference type="EMBL" id="AL663023">
    <property type="status" value="NOT_ANNOTATED_CDS"/>
    <property type="molecule type" value="Genomic_DNA"/>
</dbReference>
<dbReference type="EMBL" id="BC069150">
    <property type="protein sequence ID" value="AAH69150.1"/>
    <property type="molecule type" value="mRNA"/>
</dbReference>
<dbReference type="EMBL" id="BC112290">
    <property type="protein sequence ID" value="AAI12291.1"/>
    <property type="molecule type" value="mRNA"/>
</dbReference>
<dbReference type="EMBL" id="AF399587">
    <property type="protein sequence ID" value="AAK95072.1"/>
    <property type="molecule type" value="Genomic_DNA"/>
</dbReference>
<dbReference type="EMBL" id="BK004527">
    <property type="protein sequence ID" value="DAA04925.1"/>
    <property type="molecule type" value="Genomic_DNA"/>
</dbReference>
<dbReference type="PIR" id="S20573">
    <property type="entry name" value="S20573"/>
</dbReference>
<dbReference type="RefSeq" id="NP_036483.2">
    <property type="nucleotide sequence ID" value="NM_012351.2"/>
</dbReference>
<dbReference type="SMR" id="P30954"/>
<dbReference type="FunCoup" id="P30954">
    <property type="interactions" value="418"/>
</dbReference>
<dbReference type="STRING" id="9606.ENSP00000492902"/>
<dbReference type="GlyCosmos" id="P30954">
    <property type="glycosylation" value="2 sites, No reported glycans"/>
</dbReference>
<dbReference type="GlyGen" id="P30954">
    <property type="glycosylation" value="2 sites"/>
</dbReference>
<dbReference type="iPTMnet" id="P30954"/>
<dbReference type="PhosphoSitePlus" id="P30954"/>
<dbReference type="BioMuta" id="OR10J1"/>
<dbReference type="DMDM" id="292495022"/>
<dbReference type="PaxDb" id="9606-ENSP00000399078"/>
<dbReference type="Antibodypedia" id="57145">
    <property type="antibodies" value="44 antibodies from 13 providers"/>
</dbReference>
<dbReference type="DNASU" id="26476"/>
<dbReference type="Ensembl" id="ENST00000641630.1">
    <property type="protein sequence ID" value="ENSP00000492902.1"/>
    <property type="gene ID" value="ENSG00000196184.10"/>
</dbReference>
<dbReference type="Ensembl" id="ENST00000709168.1">
    <property type="protein sequence ID" value="ENSP00000517532.1"/>
    <property type="gene ID" value="ENSG00000291903.1"/>
</dbReference>
<dbReference type="GeneID" id="26476"/>
<dbReference type="KEGG" id="hsa:26476"/>
<dbReference type="UCSC" id="uc010piv.3">
    <property type="organism name" value="human"/>
</dbReference>
<dbReference type="AGR" id="HGNC:8175"/>
<dbReference type="CTD" id="26476"/>
<dbReference type="DisGeNET" id="26476"/>
<dbReference type="GeneCards" id="OR10J1"/>
<dbReference type="HGNC" id="HGNC:8175">
    <property type="gene designation" value="OR10J1"/>
</dbReference>
<dbReference type="HPA" id="ENSG00000196184">
    <property type="expression patterns" value="Tissue enriched (testis)"/>
</dbReference>
<dbReference type="neXtProt" id="NX_P30954"/>
<dbReference type="OpenTargets" id="ENSG00000196184"/>
<dbReference type="PharmGKB" id="PA31982"/>
<dbReference type="VEuPathDB" id="HostDB:ENSG00000196184"/>
<dbReference type="eggNOG" id="ENOG502QVH7">
    <property type="taxonomic scope" value="Eukaryota"/>
</dbReference>
<dbReference type="GeneTree" id="ENSGT00940000163973"/>
<dbReference type="HOGENOM" id="CLU_012526_5_5_1"/>
<dbReference type="InParanoid" id="P30954"/>
<dbReference type="OrthoDB" id="9975554at2759"/>
<dbReference type="PAN-GO" id="P30954">
    <property type="GO annotations" value="4 GO annotations based on evolutionary models"/>
</dbReference>
<dbReference type="PhylomeDB" id="P30954"/>
<dbReference type="TreeFam" id="TF337624"/>
<dbReference type="PathwayCommons" id="P30954"/>
<dbReference type="Reactome" id="R-HSA-9752946">
    <property type="pathway name" value="Expression and translocation of olfactory receptors"/>
</dbReference>
<dbReference type="BioGRID-ORCS" id="26476">
    <property type="hits" value="15 hits in 752 CRISPR screens"/>
</dbReference>
<dbReference type="ChiTaRS" id="OR10J1">
    <property type="organism name" value="human"/>
</dbReference>
<dbReference type="GeneWiki" id="OR10J1"/>
<dbReference type="GenomeRNAi" id="26476"/>
<dbReference type="Pharos" id="P30954">
    <property type="development level" value="Tdark"/>
</dbReference>
<dbReference type="PRO" id="PR:P30954"/>
<dbReference type="Proteomes" id="UP000005640">
    <property type="component" value="Chromosome 1"/>
</dbReference>
<dbReference type="RNAct" id="P30954">
    <property type="molecule type" value="protein"/>
</dbReference>
<dbReference type="Bgee" id="ENSG00000196184">
    <property type="expression patterns" value="Expressed in sperm and 14 other cell types or tissues"/>
</dbReference>
<dbReference type="ExpressionAtlas" id="P30954">
    <property type="expression patterns" value="baseline and differential"/>
</dbReference>
<dbReference type="GO" id="GO:0016020">
    <property type="term" value="C:membrane"/>
    <property type="evidence" value="ECO:0000318"/>
    <property type="project" value="GO_Central"/>
</dbReference>
<dbReference type="GO" id="GO:0005886">
    <property type="term" value="C:plasma membrane"/>
    <property type="evidence" value="ECO:0000304"/>
    <property type="project" value="ProtInc"/>
</dbReference>
<dbReference type="GO" id="GO:0004930">
    <property type="term" value="F:G protein-coupled receptor activity"/>
    <property type="evidence" value="ECO:0000304"/>
    <property type="project" value="ProtInc"/>
</dbReference>
<dbReference type="GO" id="GO:0005549">
    <property type="term" value="F:odorant binding"/>
    <property type="evidence" value="ECO:0000318"/>
    <property type="project" value="GO_Central"/>
</dbReference>
<dbReference type="GO" id="GO:0004984">
    <property type="term" value="F:olfactory receptor activity"/>
    <property type="evidence" value="ECO:0000318"/>
    <property type="project" value="GO_Central"/>
</dbReference>
<dbReference type="GO" id="GO:0050911">
    <property type="term" value="P:detection of chemical stimulus involved in sensory perception of smell"/>
    <property type="evidence" value="ECO:0000318"/>
    <property type="project" value="GO_Central"/>
</dbReference>
<dbReference type="GO" id="GO:0007186">
    <property type="term" value="P:G protein-coupled receptor signaling pathway"/>
    <property type="evidence" value="ECO:0000304"/>
    <property type="project" value="ProtInc"/>
</dbReference>
<dbReference type="GO" id="GO:0007606">
    <property type="term" value="P:sensory perception of chemical stimulus"/>
    <property type="evidence" value="ECO:0000304"/>
    <property type="project" value="ProtInc"/>
</dbReference>
<dbReference type="GO" id="GO:0007338">
    <property type="term" value="P:single fertilization"/>
    <property type="evidence" value="ECO:0000304"/>
    <property type="project" value="ProtInc"/>
</dbReference>
<dbReference type="CDD" id="cd15225">
    <property type="entry name" value="7tmA_OR10A-like"/>
    <property type="match status" value="1"/>
</dbReference>
<dbReference type="FunFam" id="1.20.1070.10:FF:000001">
    <property type="entry name" value="Olfactory receptor"/>
    <property type="match status" value="1"/>
</dbReference>
<dbReference type="Gene3D" id="1.20.1070.10">
    <property type="entry name" value="Rhodopsin 7-helix transmembrane proteins"/>
    <property type="match status" value="1"/>
</dbReference>
<dbReference type="InterPro" id="IPR000276">
    <property type="entry name" value="GPCR_Rhodpsn"/>
</dbReference>
<dbReference type="InterPro" id="IPR017452">
    <property type="entry name" value="GPCR_Rhodpsn_7TM"/>
</dbReference>
<dbReference type="InterPro" id="IPR000725">
    <property type="entry name" value="Olfact_rcpt"/>
</dbReference>
<dbReference type="PANTHER" id="PTHR26453">
    <property type="entry name" value="OLFACTORY RECEPTOR"/>
    <property type="match status" value="1"/>
</dbReference>
<dbReference type="Pfam" id="PF13853">
    <property type="entry name" value="7tm_4"/>
    <property type="match status" value="1"/>
</dbReference>
<dbReference type="PRINTS" id="PR00237">
    <property type="entry name" value="GPCRRHODOPSN"/>
</dbReference>
<dbReference type="PRINTS" id="PR00245">
    <property type="entry name" value="OLFACTORYR"/>
</dbReference>
<dbReference type="SUPFAM" id="SSF81321">
    <property type="entry name" value="Family A G protein-coupled receptor-like"/>
    <property type="match status" value="1"/>
</dbReference>
<dbReference type="PROSITE" id="PS00237">
    <property type="entry name" value="G_PROTEIN_RECEP_F1_1"/>
    <property type="match status" value="1"/>
</dbReference>
<dbReference type="PROSITE" id="PS50262">
    <property type="entry name" value="G_PROTEIN_RECEP_F1_2"/>
    <property type="match status" value="1"/>
</dbReference>
<protein>
    <recommendedName>
        <fullName>Olfactory receptor 10J1</fullName>
    </recommendedName>
    <alternativeName>
        <fullName>Olfactory receptor OR1-26</fullName>
    </alternativeName>
    <alternativeName>
        <fullName>Olfactory receptor-like protein HGMP07J</fullName>
    </alternativeName>
</protein>
<organism>
    <name type="scientific">Homo sapiens</name>
    <name type="common">Human</name>
    <dbReference type="NCBI Taxonomy" id="9606"/>
    <lineage>
        <taxon>Eukaryota</taxon>
        <taxon>Metazoa</taxon>
        <taxon>Chordata</taxon>
        <taxon>Craniata</taxon>
        <taxon>Vertebrata</taxon>
        <taxon>Euteleostomi</taxon>
        <taxon>Mammalia</taxon>
        <taxon>Eutheria</taxon>
        <taxon>Euarchontoglires</taxon>
        <taxon>Primates</taxon>
        <taxon>Haplorrhini</taxon>
        <taxon>Catarrhini</taxon>
        <taxon>Hominidae</taxon>
        <taxon>Homo</taxon>
    </lineage>
</organism>
<proteinExistence type="evidence at transcript level"/>
<name>O10J1_HUMAN</name>
<comment type="function">
    <text evidence="7">Odorant receptor.</text>
</comment>
<comment type="subcellular location">
    <subcellularLocation>
        <location>Cell membrane</location>
        <topology>Multi-pass membrane protein</topology>
    </subcellularLocation>
</comment>
<comment type="similarity">
    <text evidence="2">Belongs to the G-protein coupled receptor 1 family.</text>
</comment>
<comment type="online information" name="Human Olfactory Receptor Data Exploratorium (HORDE)">
    <link uri="http://genome.weizmann.ac.il/horde/card/index/symbol:OR10J1"/>
</comment>
<accession>P30954</accession>
<accession>Q2M1M8</accession>
<accession>Q5VSV1</accession>
<accession>Q6IET5</accession>
<accession>Q96R56</accession>
<sequence>MLLCFRFGNQSMKRENFTLITDFVFQGFSSFHEQQITLFGVFLALYILTLAGNIIIVTIIRMDLHLHTPMYFFLSMLSTSETVYTLVILPRMLSSLVGMSQPISLAGCATQMFFFVTFGITNCFLLTAMGYDRYVAICNPLRYMVIMNKRLRIQLVLGACSIGLIVAITQVTSVFRLPFCARKVPHFFCDIRPVMKLSCIDTTVNEILTLIISVLVLVVPMGLVFISYVLIISTILKIASVEGRKKAFATCASHLTVVIVHYSCASIAYLKPKSENTREHDQLISVTYTVITPLLNPVVYTLRNKEVKDALCRAVGGKFS</sequence>
<reference key="1">
    <citation type="journal article" date="1992" name="Nature">
        <title>Expression of members of the putative olfactory receptor gene family in mammalian germ cells.</title>
        <authorList>
            <person name="Parmentier M."/>
            <person name="Libert F."/>
            <person name="Schurmans S."/>
            <person name="Schiffmann S."/>
            <person name="Lefort A."/>
            <person name="Eggerickx D."/>
            <person name="Ledent C."/>
            <person name="Mollereau C."/>
            <person name="Gerard C."/>
            <person name="Perret J."/>
            <person name="Grootegoed A."/>
            <person name="Vassart G."/>
        </authorList>
    </citation>
    <scope>NUCLEOTIDE SEQUENCE [GENOMIC DNA]</scope>
    <scope>VARIANTS ILE-62 AND MET-103</scope>
    <source>
        <tissue>Testis</tissue>
    </source>
</reference>
<reference key="2">
    <citation type="journal article" date="2006" name="Nature">
        <title>The DNA sequence and biological annotation of human chromosome 1.</title>
        <authorList>
            <person name="Gregory S.G."/>
            <person name="Barlow K.F."/>
            <person name="McLay K.E."/>
            <person name="Kaul R."/>
            <person name="Swarbreck D."/>
            <person name="Dunham A."/>
            <person name="Scott C.E."/>
            <person name="Howe K.L."/>
            <person name="Woodfine K."/>
            <person name="Spencer C.C.A."/>
            <person name="Jones M.C."/>
            <person name="Gillson C."/>
            <person name="Searle S."/>
            <person name="Zhou Y."/>
            <person name="Kokocinski F."/>
            <person name="McDonald L."/>
            <person name="Evans R."/>
            <person name="Phillips K."/>
            <person name="Atkinson A."/>
            <person name="Cooper R."/>
            <person name="Jones C."/>
            <person name="Hall R.E."/>
            <person name="Andrews T.D."/>
            <person name="Lloyd C."/>
            <person name="Ainscough R."/>
            <person name="Almeida J.P."/>
            <person name="Ambrose K.D."/>
            <person name="Anderson F."/>
            <person name="Andrew R.W."/>
            <person name="Ashwell R.I.S."/>
            <person name="Aubin K."/>
            <person name="Babbage A.K."/>
            <person name="Bagguley C.L."/>
            <person name="Bailey J."/>
            <person name="Beasley H."/>
            <person name="Bethel G."/>
            <person name="Bird C.P."/>
            <person name="Bray-Allen S."/>
            <person name="Brown J.Y."/>
            <person name="Brown A.J."/>
            <person name="Buckley D."/>
            <person name="Burton J."/>
            <person name="Bye J."/>
            <person name="Carder C."/>
            <person name="Chapman J.C."/>
            <person name="Clark S.Y."/>
            <person name="Clarke G."/>
            <person name="Clee C."/>
            <person name="Cobley V."/>
            <person name="Collier R.E."/>
            <person name="Corby N."/>
            <person name="Coville G.J."/>
            <person name="Davies J."/>
            <person name="Deadman R."/>
            <person name="Dunn M."/>
            <person name="Earthrowl M."/>
            <person name="Ellington A.G."/>
            <person name="Errington H."/>
            <person name="Frankish A."/>
            <person name="Frankland J."/>
            <person name="French L."/>
            <person name="Garner P."/>
            <person name="Garnett J."/>
            <person name="Gay L."/>
            <person name="Ghori M.R.J."/>
            <person name="Gibson R."/>
            <person name="Gilby L.M."/>
            <person name="Gillett W."/>
            <person name="Glithero R.J."/>
            <person name="Grafham D.V."/>
            <person name="Griffiths C."/>
            <person name="Griffiths-Jones S."/>
            <person name="Grocock R."/>
            <person name="Hammond S."/>
            <person name="Harrison E.S.I."/>
            <person name="Hart E."/>
            <person name="Haugen E."/>
            <person name="Heath P.D."/>
            <person name="Holmes S."/>
            <person name="Holt K."/>
            <person name="Howden P.J."/>
            <person name="Hunt A.R."/>
            <person name="Hunt S.E."/>
            <person name="Hunter G."/>
            <person name="Isherwood J."/>
            <person name="James R."/>
            <person name="Johnson C."/>
            <person name="Johnson D."/>
            <person name="Joy A."/>
            <person name="Kay M."/>
            <person name="Kershaw J.K."/>
            <person name="Kibukawa M."/>
            <person name="Kimberley A.M."/>
            <person name="King A."/>
            <person name="Knights A.J."/>
            <person name="Lad H."/>
            <person name="Laird G."/>
            <person name="Lawlor S."/>
            <person name="Leongamornlert D.A."/>
            <person name="Lloyd D.M."/>
            <person name="Loveland J."/>
            <person name="Lovell J."/>
            <person name="Lush M.J."/>
            <person name="Lyne R."/>
            <person name="Martin S."/>
            <person name="Mashreghi-Mohammadi M."/>
            <person name="Matthews L."/>
            <person name="Matthews N.S.W."/>
            <person name="McLaren S."/>
            <person name="Milne S."/>
            <person name="Mistry S."/>
            <person name="Moore M.J.F."/>
            <person name="Nickerson T."/>
            <person name="O'Dell C.N."/>
            <person name="Oliver K."/>
            <person name="Palmeiri A."/>
            <person name="Palmer S.A."/>
            <person name="Parker A."/>
            <person name="Patel D."/>
            <person name="Pearce A.V."/>
            <person name="Peck A.I."/>
            <person name="Pelan S."/>
            <person name="Phelps K."/>
            <person name="Phillimore B.J."/>
            <person name="Plumb R."/>
            <person name="Rajan J."/>
            <person name="Raymond C."/>
            <person name="Rouse G."/>
            <person name="Saenphimmachak C."/>
            <person name="Sehra H.K."/>
            <person name="Sheridan E."/>
            <person name="Shownkeen R."/>
            <person name="Sims S."/>
            <person name="Skuce C.D."/>
            <person name="Smith M."/>
            <person name="Steward C."/>
            <person name="Subramanian S."/>
            <person name="Sycamore N."/>
            <person name="Tracey A."/>
            <person name="Tromans A."/>
            <person name="Van Helmond Z."/>
            <person name="Wall M."/>
            <person name="Wallis J.M."/>
            <person name="White S."/>
            <person name="Whitehead S.L."/>
            <person name="Wilkinson J.E."/>
            <person name="Willey D.L."/>
            <person name="Williams H."/>
            <person name="Wilming L."/>
            <person name="Wray P.W."/>
            <person name="Wu Z."/>
            <person name="Coulson A."/>
            <person name="Vaudin M."/>
            <person name="Sulston J.E."/>
            <person name="Durbin R.M."/>
            <person name="Hubbard T."/>
            <person name="Wooster R."/>
            <person name="Dunham I."/>
            <person name="Carter N.P."/>
            <person name="McVean G."/>
            <person name="Ross M.T."/>
            <person name="Harrow J."/>
            <person name="Olson M.V."/>
            <person name="Beck S."/>
            <person name="Rogers J."/>
            <person name="Bentley D.R."/>
        </authorList>
    </citation>
    <scope>NUCLEOTIDE SEQUENCE [LARGE SCALE GENOMIC DNA]</scope>
</reference>
<reference key="3">
    <citation type="journal article" date="2004" name="Genome Res.">
        <title>The status, quality, and expansion of the NIH full-length cDNA project: the Mammalian Gene Collection (MGC).</title>
        <authorList>
            <consortium name="The MGC Project Team"/>
        </authorList>
    </citation>
    <scope>NUCLEOTIDE SEQUENCE [LARGE SCALE MRNA]</scope>
    <scope>VARIANTS ILE-62 AND MET-103</scope>
    <source>
        <tissue>Cerebellum</tissue>
    </source>
</reference>
<reference key="4">
    <citation type="journal article" date="2002" name="Genomics">
        <title>DEFOG: a practical scheme for deciphering families of genes.</title>
        <authorList>
            <person name="Fuchs T."/>
            <person name="Malecova B."/>
            <person name="Linhart C."/>
            <person name="Sharan R."/>
            <person name="Khen M."/>
            <person name="Herwig R."/>
            <person name="Shmulevich D."/>
            <person name="Elkon R."/>
            <person name="Steinfath M."/>
            <person name="O'Brien J.K."/>
            <person name="Radelof U."/>
            <person name="Lehrach H."/>
            <person name="Lancet D."/>
            <person name="Shamir R."/>
        </authorList>
    </citation>
    <scope>NUCLEOTIDE SEQUENCE [GENOMIC DNA] OF 79-294</scope>
    <scope>VARIANT MET-103</scope>
</reference>
<reference key="5">
    <citation type="journal article" date="2004" name="Proc. Natl. Acad. Sci. U.S.A.">
        <title>The human olfactory receptor gene family.</title>
        <authorList>
            <person name="Malnic B."/>
            <person name="Godfrey P.A."/>
            <person name="Buck L.B."/>
        </authorList>
    </citation>
    <scope>IDENTIFICATION</scope>
    <scope>VARIANTS ILE-62 AND MET-103</scope>
</reference>
<reference key="6">
    <citation type="journal article" date="2004" name="Proc. Natl. Acad. Sci. U.S.A.">
        <authorList>
            <person name="Malnic B."/>
            <person name="Godfrey P.A."/>
            <person name="Buck L.B."/>
        </authorList>
    </citation>
    <scope>ERRATUM OF PUBMED:14983052</scope>
</reference>
<feature type="chain" id="PRO_0000150707" description="Olfactory receptor 10J1">
    <location>
        <begin position="1"/>
        <end position="320"/>
    </location>
</feature>
<feature type="topological domain" description="Extracellular" evidence="1">
    <location>
        <begin position="1"/>
        <end position="36"/>
    </location>
</feature>
<feature type="transmembrane region" description="Helical; Name=1" evidence="1">
    <location>
        <begin position="37"/>
        <end position="57"/>
    </location>
</feature>
<feature type="topological domain" description="Cytoplasmic" evidence="1">
    <location>
        <begin position="58"/>
        <end position="65"/>
    </location>
</feature>
<feature type="transmembrane region" description="Helical; Name=2" evidence="1">
    <location>
        <begin position="66"/>
        <end position="86"/>
    </location>
</feature>
<feature type="topological domain" description="Extracellular" evidence="1">
    <location>
        <begin position="87"/>
        <end position="110"/>
    </location>
</feature>
<feature type="transmembrane region" description="Helical; Name=3" evidence="1">
    <location>
        <begin position="111"/>
        <end position="131"/>
    </location>
</feature>
<feature type="topological domain" description="Cytoplasmic" evidence="1">
    <location>
        <begin position="132"/>
        <end position="150"/>
    </location>
</feature>
<feature type="transmembrane region" description="Helical; Name=4" evidence="1">
    <location>
        <begin position="151"/>
        <end position="171"/>
    </location>
</feature>
<feature type="topological domain" description="Extracellular" evidence="1">
    <location>
        <begin position="172"/>
        <end position="207"/>
    </location>
</feature>
<feature type="transmembrane region" description="Helical; Name=5" evidence="1">
    <location>
        <begin position="208"/>
        <end position="227"/>
    </location>
</feature>
<feature type="topological domain" description="Cytoplasmic" evidence="1">
    <location>
        <begin position="228"/>
        <end position="247"/>
    </location>
</feature>
<feature type="transmembrane region" description="Helical; Name=6" evidence="1">
    <location>
        <begin position="248"/>
        <end position="268"/>
    </location>
</feature>
<feature type="topological domain" description="Extracellular" evidence="1">
    <location>
        <begin position="269"/>
        <end position="281"/>
    </location>
</feature>
<feature type="transmembrane region" description="Helical; Name=7" evidence="1">
    <location>
        <begin position="282"/>
        <end position="302"/>
    </location>
</feature>
<feature type="topological domain" description="Cytoplasmic" evidence="1">
    <location>
        <begin position="303"/>
        <end position="320"/>
    </location>
</feature>
<feature type="glycosylation site" description="N-linked (GlcNAc...) asparagine" evidence="1">
    <location>
        <position position="9"/>
    </location>
</feature>
<feature type="glycosylation site" description="N-linked (GlcNAc...) asparagine" evidence="1">
    <location>
        <position position="16"/>
    </location>
</feature>
<feature type="disulfide bond" evidence="2">
    <location>
        <begin position="108"/>
        <end position="199"/>
    </location>
</feature>
<feature type="sequence variant" id="VAR_034292" description="In dbSNP:rs10908722." evidence="4 5 6">
    <original>M</original>
    <variation>I</variation>
    <location>
        <position position="62"/>
    </location>
</feature>
<feature type="sequence variant" id="VAR_053281" description="In dbSNP:rs12048482." evidence="3 4 5 6">
    <original>I</original>
    <variation>M</variation>
    <location>
        <position position="103"/>
    </location>
</feature>
<feature type="sequence variant" id="VAR_034293" description="In dbSNP:rs12118628.">
    <original>M</original>
    <variation>I</variation>
    <location>
        <position position="112"/>
    </location>
</feature>
<evidence type="ECO:0000255" key="1"/>
<evidence type="ECO:0000255" key="2">
    <source>
        <dbReference type="PROSITE-ProRule" id="PRU00521"/>
    </source>
</evidence>
<evidence type="ECO:0000269" key="3">
    <source>
    </source>
</evidence>
<evidence type="ECO:0000269" key="4">
    <source>
    </source>
</evidence>
<evidence type="ECO:0000269" key="5">
    <source>
    </source>
</evidence>
<evidence type="ECO:0000269" key="6">
    <source>
    </source>
</evidence>
<evidence type="ECO:0000305" key="7"/>